<sequence>MSNGSHSSVQLKSSTYLSKPTFHFAAGLLSGLTSSILLQPADLLKTRVQQSRETAALLPTIRSILASPHPIQGLWRGTLPSALRTGFGSALYFTSLNTLRTAVAADDPGYLFRGGHGSKPQNGNSPSGVSASSALPKLSHTANLITGAVARVAAGFVMMPVTVLKVRYESDYYAYRSLWGAAKDIVRHEGVRGLFAGFGATAIRDAPYAGLYVVFYEQSKRSLASLLGASSPSARSTPTEQQKSPPSTASINFISGALAAGLATTITNPFDVVKTRVQLMPSKYKNMMRATALMLREDGMRSLFGGLGLRMGRKALSSALAWTVYEELIMWAEKRWAEEQRDVKGVL</sequence>
<protein>
    <recommendedName>
        <fullName evidence="2">Mitochondrial glycine transporter</fullName>
    </recommendedName>
    <alternativeName>
        <fullName evidence="2">Solute carrier family 25 member 38 homolog</fullName>
    </alternativeName>
</protein>
<reference key="1">
    <citation type="journal article" date="2009" name="Genome Res.">
        <title>Comparative genomic analyses of the human fungal pathogens Coccidioides and their relatives.</title>
        <authorList>
            <person name="Sharpton T.J."/>
            <person name="Stajich J.E."/>
            <person name="Rounsley S.D."/>
            <person name="Gardner M.J."/>
            <person name="Wortman J.R."/>
            <person name="Jordar V.S."/>
            <person name="Maiti R."/>
            <person name="Kodira C.D."/>
            <person name="Neafsey D.E."/>
            <person name="Zeng Q."/>
            <person name="Hung C.-Y."/>
            <person name="McMahan C."/>
            <person name="Muszewska A."/>
            <person name="Grynberg M."/>
            <person name="Mandel M.A."/>
            <person name="Kellner E.M."/>
            <person name="Barker B.M."/>
            <person name="Galgiani J.N."/>
            <person name="Orbach M.J."/>
            <person name="Kirkland T.N."/>
            <person name="Cole G.T."/>
            <person name="Henn M.R."/>
            <person name="Birren B.W."/>
            <person name="Taylor J.W."/>
        </authorList>
    </citation>
    <scope>NUCLEOTIDE SEQUENCE [LARGE SCALE GENOMIC DNA]</scope>
    <source>
        <strain>RS</strain>
    </source>
</reference>
<reference key="2">
    <citation type="journal article" date="2010" name="Genome Res.">
        <title>Population genomic sequencing of Coccidioides fungi reveals recent hybridization and transposon control.</title>
        <authorList>
            <person name="Neafsey D.E."/>
            <person name="Barker B.M."/>
            <person name="Sharpton T.J."/>
            <person name="Stajich J.E."/>
            <person name="Park D.J."/>
            <person name="Whiston E."/>
            <person name="Hung C.-Y."/>
            <person name="McMahan C."/>
            <person name="White J."/>
            <person name="Sykes S."/>
            <person name="Heiman D."/>
            <person name="Young S."/>
            <person name="Zeng Q."/>
            <person name="Abouelleil A."/>
            <person name="Aftuck L."/>
            <person name="Bessette D."/>
            <person name="Brown A."/>
            <person name="FitzGerald M."/>
            <person name="Lui A."/>
            <person name="Macdonald J.P."/>
            <person name="Priest M."/>
            <person name="Orbach M.J."/>
            <person name="Galgiani J.N."/>
            <person name="Kirkland T.N."/>
            <person name="Cole G.T."/>
            <person name="Birren B.W."/>
            <person name="Henn M.R."/>
            <person name="Taylor J.W."/>
            <person name="Rounsley S.D."/>
        </authorList>
    </citation>
    <scope>GENOME REANNOTATION</scope>
    <source>
        <strain>RS</strain>
    </source>
</reference>
<gene>
    <name type="ORF">CIMG_07070</name>
</gene>
<proteinExistence type="inferred from homology"/>
<organism>
    <name type="scientific">Coccidioides immitis (strain RS)</name>
    <name type="common">Valley fever fungus</name>
    <dbReference type="NCBI Taxonomy" id="246410"/>
    <lineage>
        <taxon>Eukaryota</taxon>
        <taxon>Fungi</taxon>
        <taxon>Dikarya</taxon>
        <taxon>Ascomycota</taxon>
        <taxon>Pezizomycotina</taxon>
        <taxon>Eurotiomycetes</taxon>
        <taxon>Eurotiomycetidae</taxon>
        <taxon>Onygenales</taxon>
        <taxon>Onygenaceae</taxon>
        <taxon>Coccidioides</taxon>
    </lineage>
</organism>
<comment type="function">
    <text evidence="2">Mitochondrial glycine transporter that imports glycine into the mitochondrial matrix. Plays an important role in providing glycine for the first enzymatic step in heme biosynthesis, the condensation of glycine with succinyl-CoA to produce 5-aminolevulinate (ALA) in the mitochondrial matrix.</text>
</comment>
<comment type="catalytic activity">
    <reaction evidence="1">
        <text>glycine(in) = glycine(out)</text>
        <dbReference type="Rhea" id="RHEA:70715"/>
        <dbReference type="ChEBI" id="CHEBI:57305"/>
    </reaction>
</comment>
<comment type="subcellular location">
    <subcellularLocation>
        <location evidence="2">Mitochondrion inner membrane</location>
        <topology evidence="2">Multi-pass membrane protein</topology>
    </subcellularLocation>
</comment>
<comment type="similarity">
    <text evidence="2">Belongs to the mitochondrial carrier (TC 2.A.29) family. SLC25A38 subfamily.</text>
</comment>
<dbReference type="EMBL" id="GG704912">
    <property type="protein sequence ID" value="EAS31591.3"/>
    <property type="molecule type" value="Genomic_DNA"/>
</dbReference>
<dbReference type="RefSeq" id="XP_001243174.1">
    <property type="nucleotide sequence ID" value="XM_001243173.2"/>
</dbReference>
<dbReference type="SMR" id="Q1DRJ3"/>
<dbReference type="FunCoup" id="Q1DRJ3">
    <property type="interactions" value="99"/>
</dbReference>
<dbReference type="STRING" id="246410.Q1DRJ3"/>
<dbReference type="GeneID" id="4561746"/>
<dbReference type="KEGG" id="cim:CIMG_07070"/>
<dbReference type="VEuPathDB" id="FungiDB:CIMG_07070"/>
<dbReference type="InParanoid" id="Q1DRJ3"/>
<dbReference type="OMA" id="WGIYEEL"/>
<dbReference type="OrthoDB" id="1924968at2759"/>
<dbReference type="Proteomes" id="UP000001261">
    <property type="component" value="Unassembled WGS sequence"/>
</dbReference>
<dbReference type="GO" id="GO:0005743">
    <property type="term" value="C:mitochondrial inner membrane"/>
    <property type="evidence" value="ECO:0007669"/>
    <property type="project" value="UniProtKB-SubCell"/>
</dbReference>
<dbReference type="GO" id="GO:0015187">
    <property type="term" value="F:glycine transmembrane transporter activity"/>
    <property type="evidence" value="ECO:0007669"/>
    <property type="project" value="UniProtKB-UniRule"/>
</dbReference>
<dbReference type="GO" id="GO:1904983">
    <property type="term" value="P:glycine import into mitochondrion"/>
    <property type="evidence" value="ECO:0007669"/>
    <property type="project" value="UniProtKB-UniRule"/>
</dbReference>
<dbReference type="FunFam" id="1.50.40.10:FF:000103">
    <property type="entry name" value="Mitochondrial glycine transporter"/>
    <property type="match status" value="1"/>
</dbReference>
<dbReference type="Gene3D" id="1.50.40.10">
    <property type="entry name" value="Mitochondrial carrier domain"/>
    <property type="match status" value="1"/>
</dbReference>
<dbReference type="HAMAP" id="MF_03064">
    <property type="entry name" value="SLC25A38"/>
    <property type="match status" value="1"/>
</dbReference>
<dbReference type="InterPro" id="IPR030847">
    <property type="entry name" value="Hem25/SLC25A38"/>
</dbReference>
<dbReference type="InterPro" id="IPR018108">
    <property type="entry name" value="Mitochondrial_sb/sol_carrier"/>
</dbReference>
<dbReference type="InterPro" id="IPR023395">
    <property type="entry name" value="Mt_carrier_dom_sf"/>
</dbReference>
<dbReference type="PANTHER" id="PTHR46181">
    <property type="entry name" value="MITOCHONDRIAL GLYCINE TRANSPORTER"/>
    <property type="match status" value="1"/>
</dbReference>
<dbReference type="PANTHER" id="PTHR46181:SF3">
    <property type="entry name" value="MITOCHONDRIAL GLYCINE TRANSPORTER"/>
    <property type="match status" value="1"/>
</dbReference>
<dbReference type="Pfam" id="PF00153">
    <property type="entry name" value="Mito_carr"/>
    <property type="match status" value="3"/>
</dbReference>
<dbReference type="SUPFAM" id="SSF103506">
    <property type="entry name" value="Mitochondrial carrier"/>
    <property type="match status" value="1"/>
</dbReference>
<dbReference type="PROSITE" id="PS50920">
    <property type="entry name" value="SOLCAR"/>
    <property type="match status" value="3"/>
</dbReference>
<name>S2538_COCIM</name>
<feature type="chain" id="PRO_0000378934" description="Mitochondrial glycine transporter">
    <location>
        <begin position="1"/>
        <end position="347"/>
    </location>
</feature>
<feature type="transmembrane region" description="Helical; Name=1" evidence="2">
    <location>
        <begin position="24"/>
        <end position="49"/>
    </location>
</feature>
<feature type="transmembrane region" description="Helical; Name=2" evidence="2">
    <location>
        <begin position="77"/>
        <end position="103"/>
    </location>
</feature>
<feature type="transmembrane region" description="Helical; Name=3" evidence="2">
    <location>
        <begin position="144"/>
        <end position="169"/>
    </location>
</feature>
<feature type="transmembrane region" description="Helical; Name=4" evidence="2">
    <location>
        <begin position="197"/>
        <end position="220"/>
    </location>
</feature>
<feature type="transmembrane region" description="Helical; Name=5" evidence="2">
    <location>
        <begin position="251"/>
        <end position="277"/>
    </location>
</feature>
<feature type="transmembrane region" description="Helical; Name=6" evidence="2">
    <location>
        <begin position="306"/>
        <end position="324"/>
    </location>
</feature>
<feature type="repeat" description="Solcar 1" evidence="2">
    <location>
        <begin position="18"/>
        <end position="102"/>
    </location>
</feature>
<feature type="repeat" description="Solcar 2" evidence="2">
    <location>
        <begin position="138"/>
        <end position="222"/>
    </location>
</feature>
<feature type="repeat" description="Solcar 3" evidence="2">
    <location>
        <begin position="247"/>
        <end position="331"/>
    </location>
</feature>
<accession>Q1DRJ3</accession>
<accession>J3K3B3</accession>
<keyword id="KW-0472">Membrane</keyword>
<keyword id="KW-0496">Mitochondrion</keyword>
<keyword id="KW-0999">Mitochondrion inner membrane</keyword>
<keyword id="KW-1185">Reference proteome</keyword>
<keyword id="KW-0677">Repeat</keyword>
<keyword id="KW-0812">Transmembrane</keyword>
<keyword id="KW-1133">Transmembrane helix</keyword>
<keyword id="KW-0813">Transport</keyword>
<evidence type="ECO:0000250" key="1">
    <source>
        <dbReference type="UniProtKB" id="Q96DW6"/>
    </source>
</evidence>
<evidence type="ECO:0000255" key="2">
    <source>
        <dbReference type="HAMAP-Rule" id="MF_03064"/>
    </source>
</evidence>